<accession>Q03EC0</accession>
<gene>
    <name evidence="1" type="primary">rpsS</name>
    <name type="ordered locus">PEPE_1414</name>
</gene>
<feature type="chain" id="PRO_1000051094" description="Small ribosomal subunit protein uS19">
    <location>
        <begin position="1"/>
        <end position="93"/>
    </location>
</feature>
<evidence type="ECO:0000255" key="1">
    <source>
        <dbReference type="HAMAP-Rule" id="MF_00531"/>
    </source>
</evidence>
<evidence type="ECO:0000305" key="2"/>
<organism>
    <name type="scientific">Pediococcus pentosaceus (strain ATCC 25745 / CCUG 21536 / LMG 10740 / 183-1w)</name>
    <dbReference type="NCBI Taxonomy" id="278197"/>
    <lineage>
        <taxon>Bacteria</taxon>
        <taxon>Bacillati</taxon>
        <taxon>Bacillota</taxon>
        <taxon>Bacilli</taxon>
        <taxon>Lactobacillales</taxon>
        <taxon>Lactobacillaceae</taxon>
        <taxon>Pediococcus</taxon>
    </lineage>
</organism>
<name>RS19_PEDPA</name>
<sequence length="93" mass="10486">MGRSLKKGPFADEHLLKKVDAQKDQDKKPVIKTWSRRSTIFPSFIGCTIAVYDGRKHVPVYIQDDMVGHKLGEFVPTRTFRGHGGDDKKTSGK</sequence>
<keyword id="KW-0687">Ribonucleoprotein</keyword>
<keyword id="KW-0689">Ribosomal protein</keyword>
<keyword id="KW-0694">RNA-binding</keyword>
<keyword id="KW-0699">rRNA-binding</keyword>
<proteinExistence type="inferred from homology"/>
<reference key="1">
    <citation type="journal article" date="2006" name="Proc. Natl. Acad. Sci. U.S.A.">
        <title>Comparative genomics of the lactic acid bacteria.</title>
        <authorList>
            <person name="Makarova K.S."/>
            <person name="Slesarev A."/>
            <person name="Wolf Y.I."/>
            <person name="Sorokin A."/>
            <person name="Mirkin B."/>
            <person name="Koonin E.V."/>
            <person name="Pavlov A."/>
            <person name="Pavlova N."/>
            <person name="Karamychev V."/>
            <person name="Polouchine N."/>
            <person name="Shakhova V."/>
            <person name="Grigoriev I."/>
            <person name="Lou Y."/>
            <person name="Rohksar D."/>
            <person name="Lucas S."/>
            <person name="Huang K."/>
            <person name="Goodstein D.M."/>
            <person name="Hawkins T."/>
            <person name="Plengvidhya V."/>
            <person name="Welker D."/>
            <person name="Hughes J."/>
            <person name="Goh Y."/>
            <person name="Benson A."/>
            <person name="Baldwin K."/>
            <person name="Lee J.-H."/>
            <person name="Diaz-Muniz I."/>
            <person name="Dosti B."/>
            <person name="Smeianov V."/>
            <person name="Wechter W."/>
            <person name="Barabote R."/>
            <person name="Lorca G."/>
            <person name="Altermann E."/>
            <person name="Barrangou R."/>
            <person name="Ganesan B."/>
            <person name="Xie Y."/>
            <person name="Rawsthorne H."/>
            <person name="Tamir D."/>
            <person name="Parker C."/>
            <person name="Breidt F."/>
            <person name="Broadbent J.R."/>
            <person name="Hutkins R."/>
            <person name="O'Sullivan D."/>
            <person name="Steele J."/>
            <person name="Unlu G."/>
            <person name="Saier M.H. Jr."/>
            <person name="Klaenhammer T."/>
            <person name="Richardson P."/>
            <person name="Kozyavkin S."/>
            <person name="Weimer B.C."/>
            <person name="Mills D.A."/>
        </authorList>
    </citation>
    <scope>NUCLEOTIDE SEQUENCE [LARGE SCALE GENOMIC DNA]</scope>
    <source>
        <strain>ATCC 25745 / CCUG 21536 / LMG 10740 / 183-1w</strain>
    </source>
</reference>
<protein>
    <recommendedName>
        <fullName evidence="1">Small ribosomal subunit protein uS19</fullName>
    </recommendedName>
    <alternativeName>
        <fullName evidence="2">30S ribosomal protein S19</fullName>
    </alternativeName>
</protein>
<comment type="function">
    <text evidence="1">Protein S19 forms a complex with S13 that binds strongly to the 16S ribosomal RNA.</text>
</comment>
<comment type="similarity">
    <text evidence="1">Belongs to the universal ribosomal protein uS19 family.</text>
</comment>
<dbReference type="EMBL" id="CP000422">
    <property type="protein sequence ID" value="ABJ68452.1"/>
    <property type="molecule type" value="Genomic_DNA"/>
</dbReference>
<dbReference type="RefSeq" id="WP_002833332.1">
    <property type="nucleotide sequence ID" value="NC_008525.1"/>
</dbReference>
<dbReference type="SMR" id="Q03EC0"/>
<dbReference type="STRING" id="278197.PEPE_1414"/>
<dbReference type="GeneID" id="33061368"/>
<dbReference type="KEGG" id="ppe:PEPE_1414"/>
<dbReference type="eggNOG" id="COG0185">
    <property type="taxonomic scope" value="Bacteria"/>
</dbReference>
<dbReference type="HOGENOM" id="CLU_144911_0_1_9"/>
<dbReference type="OrthoDB" id="9797833at2"/>
<dbReference type="Proteomes" id="UP000000773">
    <property type="component" value="Chromosome"/>
</dbReference>
<dbReference type="GO" id="GO:0005737">
    <property type="term" value="C:cytoplasm"/>
    <property type="evidence" value="ECO:0007669"/>
    <property type="project" value="UniProtKB-ARBA"/>
</dbReference>
<dbReference type="GO" id="GO:0015935">
    <property type="term" value="C:small ribosomal subunit"/>
    <property type="evidence" value="ECO:0007669"/>
    <property type="project" value="InterPro"/>
</dbReference>
<dbReference type="GO" id="GO:0019843">
    <property type="term" value="F:rRNA binding"/>
    <property type="evidence" value="ECO:0007669"/>
    <property type="project" value="UniProtKB-UniRule"/>
</dbReference>
<dbReference type="GO" id="GO:0003735">
    <property type="term" value="F:structural constituent of ribosome"/>
    <property type="evidence" value="ECO:0007669"/>
    <property type="project" value="InterPro"/>
</dbReference>
<dbReference type="GO" id="GO:0000028">
    <property type="term" value="P:ribosomal small subunit assembly"/>
    <property type="evidence" value="ECO:0007669"/>
    <property type="project" value="TreeGrafter"/>
</dbReference>
<dbReference type="GO" id="GO:0006412">
    <property type="term" value="P:translation"/>
    <property type="evidence" value="ECO:0007669"/>
    <property type="project" value="UniProtKB-UniRule"/>
</dbReference>
<dbReference type="FunFam" id="3.30.860.10:FF:000001">
    <property type="entry name" value="30S ribosomal protein S19"/>
    <property type="match status" value="1"/>
</dbReference>
<dbReference type="Gene3D" id="3.30.860.10">
    <property type="entry name" value="30s Ribosomal Protein S19, Chain A"/>
    <property type="match status" value="1"/>
</dbReference>
<dbReference type="HAMAP" id="MF_00531">
    <property type="entry name" value="Ribosomal_uS19"/>
    <property type="match status" value="1"/>
</dbReference>
<dbReference type="InterPro" id="IPR002222">
    <property type="entry name" value="Ribosomal_uS19"/>
</dbReference>
<dbReference type="InterPro" id="IPR005732">
    <property type="entry name" value="Ribosomal_uS19_bac-type"/>
</dbReference>
<dbReference type="InterPro" id="IPR020934">
    <property type="entry name" value="Ribosomal_uS19_CS"/>
</dbReference>
<dbReference type="InterPro" id="IPR023575">
    <property type="entry name" value="Ribosomal_uS19_SF"/>
</dbReference>
<dbReference type="NCBIfam" id="TIGR01050">
    <property type="entry name" value="rpsS_bact"/>
    <property type="match status" value="1"/>
</dbReference>
<dbReference type="PANTHER" id="PTHR11880">
    <property type="entry name" value="RIBOSOMAL PROTEIN S19P FAMILY MEMBER"/>
    <property type="match status" value="1"/>
</dbReference>
<dbReference type="PANTHER" id="PTHR11880:SF8">
    <property type="entry name" value="SMALL RIBOSOMAL SUBUNIT PROTEIN US19M"/>
    <property type="match status" value="1"/>
</dbReference>
<dbReference type="Pfam" id="PF00203">
    <property type="entry name" value="Ribosomal_S19"/>
    <property type="match status" value="1"/>
</dbReference>
<dbReference type="PIRSF" id="PIRSF002144">
    <property type="entry name" value="Ribosomal_S19"/>
    <property type="match status" value="1"/>
</dbReference>
<dbReference type="PRINTS" id="PR00975">
    <property type="entry name" value="RIBOSOMALS19"/>
</dbReference>
<dbReference type="SUPFAM" id="SSF54570">
    <property type="entry name" value="Ribosomal protein S19"/>
    <property type="match status" value="1"/>
</dbReference>
<dbReference type="PROSITE" id="PS00323">
    <property type="entry name" value="RIBOSOMAL_S19"/>
    <property type="match status" value="1"/>
</dbReference>